<reference key="1">
    <citation type="journal article" date="2010" name="Genome Biol. Evol.">
        <title>Continuing evolution of Burkholderia mallei through genome reduction and large-scale rearrangements.</title>
        <authorList>
            <person name="Losada L."/>
            <person name="Ronning C.M."/>
            <person name="DeShazer D."/>
            <person name="Woods D."/>
            <person name="Fedorova N."/>
            <person name="Kim H.S."/>
            <person name="Shabalina S.A."/>
            <person name="Pearson T.R."/>
            <person name="Brinkac L."/>
            <person name="Tan P."/>
            <person name="Nandi T."/>
            <person name="Crabtree J."/>
            <person name="Badger J."/>
            <person name="Beckstrom-Sternberg S."/>
            <person name="Saqib M."/>
            <person name="Schutzer S.E."/>
            <person name="Keim P."/>
            <person name="Nierman W.C."/>
        </authorList>
    </citation>
    <scope>NUCLEOTIDE SEQUENCE [LARGE SCALE GENOMIC DNA]</scope>
    <source>
        <strain>668</strain>
    </source>
</reference>
<evidence type="ECO:0000255" key="1">
    <source>
        <dbReference type="HAMAP-Rule" id="MF_01318"/>
    </source>
</evidence>
<evidence type="ECO:0000305" key="2"/>
<name>RL1_BURP6</name>
<accession>A3NEJ0</accession>
<sequence length="232" mass="24321">MAKISKRRQAFAAKVDRQKLYPIDDALALVKECASAKFDESIDVAVQLGIDAKKSDQVVRGSVVLPAGTGKSVRVAVFAQGEKAEQARAAGAEVVGMEDLAEQIKAGQMDFDIVIASPDTMRIVGTLGQILGPRGLMPNPKVGTVTPDVATAVKNAKAGQVQFRVDKAGIIHATIGRASFEPTALRTNLSALIEALQKAKPATSKGVYLRKIALSSTMGVGVRVDQGSLAAQ</sequence>
<gene>
    <name evidence="1" type="primary">rplA</name>
    <name type="ordered locus">BURPS668_3757</name>
</gene>
<keyword id="KW-0678">Repressor</keyword>
<keyword id="KW-0687">Ribonucleoprotein</keyword>
<keyword id="KW-0689">Ribosomal protein</keyword>
<keyword id="KW-0694">RNA-binding</keyword>
<keyword id="KW-0699">rRNA-binding</keyword>
<keyword id="KW-0810">Translation regulation</keyword>
<keyword id="KW-0820">tRNA-binding</keyword>
<proteinExistence type="inferred from homology"/>
<comment type="function">
    <text evidence="1">Binds directly to 23S rRNA. The L1 stalk is quite mobile in the ribosome, and is involved in E site tRNA release.</text>
</comment>
<comment type="function">
    <text evidence="1">Protein L1 is also a translational repressor protein, it controls the translation of the L11 operon by binding to its mRNA.</text>
</comment>
<comment type="subunit">
    <text evidence="1">Part of the 50S ribosomal subunit.</text>
</comment>
<comment type="similarity">
    <text evidence="1">Belongs to the universal ribosomal protein uL1 family.</text>
</comment>
<dbReference type="EMBL" id="CP000570">
    <property type="protein sequence ID" value="ABN82403.1"/>
    <property type="molecule type" value="Genomic_DNA"/>
</dbReference>
<dbReference type="RefSeq" id="WP_004185135.1">
    <property type="nucleotide sequence ID" value="NC_009074.1"/>
</dbReference>
<dbReference type="SMR" id="A3NEJ0"/>
<dbReference type="GeneID" id="93061844"/>
<dbReference type="KEGG" id="bpd:BURPS668_3757"/>
<dbReference type="HOGENOM" id="CLU_062853_0_0_4"/>
<dbReference type="GO" id="GO:0022625">
    <property type="term" value="C:cytosolic large ribosomal subunit"/>
    <property type="evidence" value="ECO:0007669"/>
    <property type="project" value="TreeGrafter"/>
</dbReference>
<dbReference type="GO" id="GO:0019843">
    <property type="term" value="F:rRNA binding"/>
    <property type="evidence" value="ECO:0007669"/>
    <property type="project" value="UniProtKB-UniRule"/>
</dbReference>
<dbReference type="GO" id="GO:0003735">
    <property type="term" value="F:structural constituent of ribosome"/>
    <property type="evidence" value="ECO:0007669"/>
    <property type="project" value="InterPro"/>
</dbReference>
<dbReference type="GO" id="GO:0000049">
    <property type="term" value="F:tRNA binding"/>
    <property type="evidence" value="ECO:0007669"/>
    <property type="project" value="UniProtKB-KW"/>
</dbReference>
<dbReference type="GO" id="GO:0006417">
    <property type="term" value="P:regulation of translation"/>
    <property type="evidence" value="ECO:0007669"/>
    <property type="project" value="UniProtKB-KW"/>
</dbReference>
<dbReference type="GO" id="GO:0006412">
    <property type="term" value="P:translation"/>
    <property type="evidence" value="ECO:0007669"/>
    <property type="project" value="UniProtKB-UniRule"/>
</dbReference>
<dbReference type="CDD" id="cd00403">
    <property type="entry name" value="Ribosomal_L1"/>
    <property type="match status" value="1"/>
</dbReference>
<dbReference type="FunFam" id="3.40.50.790:FF:000001">
    <property type="entry name" value="50S ribosomal protein L1"/>
    <property type="match status" value="1"/>
</dbReference>
<dbReference type="Gene3D" id="3.30.190.20">
    <property type="match status" value="1"/>
</dbReference>
<dbReference type="Gene3D" id="3.40.50.790">
    <property type="match status" value="1"/>
</dbReference>
<dbReference type="HAMAP" id="MF_01318_B">
    <property type="entry name" value="Ribosomal_uL1_B"/>
    <property type="match status" value="1"/>
</dbReference>
<dbReference type="InterPro" id="IPR005878">
    <property type="entry name" value="Ribosom_uL1_bac-type"/>
</dbReference>
<dbReference type="InterPro" id="IPR002143">
    <property type="entry name" value="Ribosomal_uL1"/>
</dbReference>
<dbReference type="InterPro" id="IPR023674">
    <property type="entry name" value="Ribosomal_uL1-like"/>
</dbReference>
<dbReference type="InterPro" id="IPR028364">
    <property type="entry name" value="Ribosomal_uL1/biogenesis"/>
</dbReference>
<dbReference type="InterPro" id="IPR016095">
    <property type="entry name" value="Ribosomal_uL1_3-a/b-sand"/>
</dbReference>
<dbReference type="InterPro" id="IPR023673">
    <property type="entry name" value="Ribosomal_uL1_CS"/>
</dbReference>
<dbReference type="NCBIfam" id="TIGR01169">
    <property type="entry name" value="rplA_bact"/>
    <property type="match status" value="1"/>
</dbReference>
<dbReference type="PANTHER" id="PTHR36427">
    <property type="entry name" value="54S RIBOSOMAL PROTEIN L1, MITOCHONDRIAL"/>
    <property type="match status" value="1"/>
</dbReference>
<dbReference type="PANTHER" id="PTHR36427:SF3">
    <property type="entry name" value="LARGE RIBOSOMAL SUBUNIT PROTEIN UL1M"/>
    <property type="match status" value="1"/>
</dbReference>
<dbReference type="Pfam" id="PF00687">
    <property type="entry name" value="Ribosomal_L1"/>
    <property type="match status" value="1"/>
</dbReference>
<dbReference type="PIRSF" id="PIRSF002155">
    <property type="entry name" value="Ribosomal_L1"/>
    <property type="match status" value="1"/>
</dbReference>
<dbReference type="SUPFAM" id="SSF56808">
    <property type="entry name" value="Ribosomal protein L1"/>
    <property type="match status" value="1"/>
</dbReference>
<dbReference type="PROSITE" id="PS01199">
    <property type="entry name" value="RIBOSOMAL_L1"/>
    <property type="match status" value="1"/>
</dbReference>
<feature type="chain" id="PRO_0000307978" description="Large ribosomal subunit protein uL1">
    <location>
        <begin position="1"/>
        <end position="232"/>
    </location>
</feature>
<protein>
    <recommendedName>
        <fullName evidence="1">Large ribosomal subunit protein uL1</fullName>
    </recommendedName>
    <alternativeName>
        <fullName evidence="2">50S ribosomal protein L1</fullName>
    </alternativeName>
</protein>
<organism>
    <name type="scientific">Burkholderia pseudomallei (strain 668)</name>
    <dbReference type="NCBI Taxonomy" id="320373"/>
    <lineage>
        <taxon>Bacteria</taxon>
        <taxon>Pseudomonadati</taxon>
        <taxon>Pseudomonadota</taxon>
        <taxon>Betaproteobacteria</taxon>
        <taxon>Burkholderiales</taxon>
        <taxon>Burkholderiaceae</taxon>
        <taxon>Burkholderia</taxon>
        <taxon>pseudomallei group</taxon>
    </lineage>
</organism>